<keyword id="KW-0968">Cytoplasmic vesicle</keyword>
<keyword id="KW-0472">Membrane</keyword>
<keyword id="KW-0653">Protein transport</keyword>
<keyword id="KW-1185">Reference proteome</keyword>
<keyword id="KW-0677">Repeat</keyword>
<keyword id="KW-0813">Transport</keyword>
<keyword id="KW-0926">Vacuole</keyword>
<keyword id="KW-0853">WD repeat</keyword>
<feature type="chain" id="PRO_0000051024" description="SVP1-like protein 2">
    <location>
        <begin position="1"/>
        <end position="401"/>
    </location>
</feature>
<feature type="repeat" description="WD 1">
    <location>
        <begin position="222"/>
        <end position="262"/>
    </location>
</feature>
<feature type="repeat" description="WD 2">
    <location>
        <begin position="267"/>
        <end position="306"/>
    </location>
</feature>
<gene>
    <name type="primary">HSV2</name>
    <name type="ordered locus">ADL134W</name>
</gene>
<sequence>MKTRNPIVVQRKNGPPRFLHVNFNQDQECFSCATEKGFEIYNTDPIQCSVKRRFSHNGMSGIGYTRMLYRTNYIGLVGGGASPRFSTNKIAIWDDIQQRDSVSIRFNSPVHELFLSRQYIVVVLAQSIDVYTFSGSPSRVCPVISNIHNGIADFVTCSKMRRASGPQDVEHALSQKHVIAGILAYPSGIRPGQIHIADLSNIQTPSVADASATHLPTSIIKAHKNPIHLVKLSPQGTMVATCSVEGTLIRVFSIASGSLIHEFRRGLDRALIYDMQWNGKGDKLAVVSDKFTLHIFQINEDLDKRHLLKGWFPKVKYLQGVWSMCSTKLDRSLLTHDEDTCKVGWIGDEALSLLWQKSGMWEKYVIMEKLREYKVDETLHSGAPDGRRQLYDLVRESWRQL</sequence>
<name>HSV2_EREGS</name>
<organism>
    <name type="scientific">Eremothecium gossypii (strain ATCC 10895 / CBS 109.51 / FGSC 9923 / NRRL Y-1056)</name>
    <name type="common">Yeast</name>
    <name type="synonym">Ashbya gossypii</name>
    <dbReference type="NCBI Taxonomy" id="284811"/>
    <lineage>
        <taxon>Eukaryota</taxon>
        <taxon>Fungi</taxon>
        <taxon>Dikarya</taxon>
        <taxon>Ascomycota</taxon>
        <taxon>Saccharomycotina</taxon>
        <taxon>Saccharomycetes</taxon>
        <taxon>Saccharomycetales</taxon>
        <taxon>Saccharomycetaceae</taxon>
        <taxon>Eremothecium</taxon>
    </lineage>
</organism>
<evidence type="ECO:0000250" key="1"/>
<evidence type="ECO:0000305" key="2"/>
<accession>Q75AQ4</accession>
<comment type="function">
    <text evidence="1">Involved in mitochondrial or peroxisomal functions and amino acid signaling pathways.</text>
</comment>
<comment type="subcellular location">
    <subcellularLocation>
        <location evidence="1">Vacuole membrane</location>
        <topology evidence="1">Peripheral membrane protein</topology>
    </subcellularLocation>
    <subcellularLocation>
        <location evidence="1">Cytoplasmic vesicle membrane</location>
        <topology evidence="1">Peripheral membrane protein</topology>
    </subcellularLocation>
    <text evidence="1">Vesicular and vacuolar.</text>
</comment>
<comment type="domain">
    <text evidence="1">May contain a beta-propeller domain involved in specific binding to phosphatidylinositol 3,5-bisphosphate (PIP2), leading to the association of the protein to the membrane.</text>
</comment>
<comment type="similarity">
    <text evidence="2">Belongs to the WD repeat PROPPIN family.</text>
</comment>
<proteinExistence type="inferred from homology"/>
<reference key="1">
    <citation type="journal article" date="2004" name="Science">
        <title>The Ashbya gossypii genome as a tool for mapping the ancient Saccharomyces cerevisiae genome.</title>
        <authorList>
            <person name="Dietrich F.S."/>
            <person name="Voegeli S."/>
            <person name="Brachat S."/>
            <person name="Lerch A."/>
            <person name="Gates K."/>
            <person name="Steiner S."/>
            <person name="Mohr C."/>
            <person name="Poehlmann R."/>
            <person name="Luedi P."/>
            <person name="Choi S."/>
            <person name="Wing R.A."/>
            <person name="Flavier A."/>
            <person name="Gaffney T.D."/>
            <person name="Philippsen P."/>
        </authorList>
    </citation>
    <scope>NUCLEOTIDE SEQUENCE [LARGE SCALE GENOMIC DNA]</scope>
    <source>
        <strain>ATCC 10895 / CBS 109.51 / FGSC 9923 / NRRL Y-1056</strain>
    </source>
</reference>
<reference key="2">
    <citation type="journal article" date="2013" name="G3 (Bethesda)">
        <title>Genomes of Ashbya fungi isolated from insects reveal four mating-type loci, numerous translocations, lack of transposons, and distinct gene duplications.</title>
        <authorList>
            <person name="Dietrich F.S."/>
            <person name="Voegeli S."/>
            <person name="Kuo S."/>
            <person name="Philippsen P."/>
        </authorList>
    </citation>
    <scope>GENOME REANNOTATION</scope>
    <source>
        <strain>ATCC 10895 / CBS 109.51 / FGSC 9923 / NRRL Y-1056</strain>
    </source>
</reference>
<protein>
    <recommendedName>
        <fullName>SVP1-like protein 2</fullName>
    </recommendedName>
</protein>
<dbReference type="EMBL" id="AE016817">
    <property type="protein sequence ID" value="AAS51786.1"/>
    <property type="molecule type" value="Genomic_DNA"/>
</dbReference>
<dbReference type="RefSeq" id="NP_983962.1">
    <property type="nucleotide sequence ID" value="NM_209315.1"/>
</dbReference>
<dbReference type="SMR" id="Q75AQ4"/>
<dbReference type="FunCoup" id="Q75AQ4">
    <property type="interactions" value="403"/>
</dbReference>
<dbReference type="STRING" id="284811.Q75AQ4"/>
<dbReference type="EnsemblFungi" id="AAS51786">
    <property type="protein sequence ID" value="AAS51786"/>
    <property type="gene ID" value="AGOS_ADL134W"/>
</dbReference>
<dbReference type="GeneID" id="4620104"/>
<dbReference type="KEGG" id="ago:AGOS_ADL134W"/>
<dbReference type="eggNOG" id="KOG2111">
    <property type="taxonomic scope" value="Eukaryota"/>
</dbReference>
<dbReference type="HOGENOM" id="CLU_025895_0_1_1"/>
<dbReference type="InParanoid" id="Q75AQ4"/>
<dbReference type="OMA" id="GGPQCMC"/>
<dbReference type="OrthoDB" id="1667587at2759"/>
<dbReference type="Proteomes" id="UP000000591">
    <property type="component" value="Chromosome IV"/>
</dbReference>
<dbReference type="GO" id="GO:0030659">
    <property type="term" value="C:cytoplasmic vesicle membrane"/>
    <property type="evidence" value="ECO:0007669"/>
    <property type="project" value="UniProtKB-SubCell"/>
</dbReference>
<dbReference type="GO" id="GO:0005829">
    <property type="term" value="C:cytosol"/>
    <property type="evidence" value="ECO:0000318"/>
    <property type="project" value="GO_Central"/>
</dbReference>
<dbReference type="GO" id="GO:0005768">
    <property type="term" value="C:endosome"/>
    <property type="evidence" value="ECO:0007669"/>
    <property type="project" value="EnsemblFungi"/>
</dbReference>
<dbReference type="GO" id="GO:0000324">
    <property type="term" value="C:fungal-type vacuole"/>
    <property type="evidence" value="ECO:0007669"/>
    <property type="project" value="EnsemblFungi"/>
</dbReference>
<dbReference type="GO" id="GO:0034045">
    <property type="term" value="C:phagophore assembly site membrane"/>
    <property type="evidence" value="ECO:0000318"/>
    <property type="project" value="GO_Central"/>
</dbReference>
<dbReference type="GO" id="GO:0005774">
    <property type="term" value="C:vacuolar membrane"/>
    <property type="evidence" value="ECO:0007669"/>
    <property type="project" value="UniProtKB-SubCell"/>
</dbReference>
<dbReference type="GO" id="GO:0080025">
    <property type="term" value="F:phosphatidylinositol-3,5-bisphosphate binding"/>
    <property type="evidence" value="ECO:0000318"/>
    <property type="project" value="GO_Central"/>
</dbReference>
<dbReference type="GO" id="GO:0032266">
    <property type="term" value="F:phosphatidylinositol-3-phosphate binding"/>
    <property type="evidence" value="ECO:0000318"/>
    <property type="project" value="GO_Central"/>
</dbReference>
<dbReference type="GO" id="GO:0070273">
    <property type="term" value="F:phosphatidylinositol-4-phosphate binding"/>
    <property type="evidence" value="ECO:0007669"/>
    <property type="project" value="EnsemblFungi"/>
</dbReference>
<dbReference type="GO" id="GO:0010314">
    <property type="term" value="F:phosphatidylinositol-5-phosphate binding"/>
    <property type="evidence" value="ECO:0007669"/>
    <property type="project" value="EnsemblFungi"/>
</dbReference>
<dbReference type="GO" id="GO:0030674">
    <property type="term" value="F:protein-macromolecule adaptor activity"/>
    <property type="evidence" value="ECO:0000318"/>
    <property type="project" value="GO_Central"/>
</dbReference>
<dbReference type="GO" id="GO:0000422">
    <property type="term" value="P:autophagy of mitochondrion"/>
    <property type="evidence" value="ECO:0000318"/>
    <property type="project" value="GO_Central"/>
</dbReference>
<dbReference type="GO" id="GO:0061723">
    <property type="term" value="P:glycophagy"/>
    <property type="evidence" value="ECO:0000318"/>
    <property type="project" value="GO_Central"/>
</dbReference>
<dbReference type="GO" id="GO:0044804">
    <property type="term" value="P:nucleophagy"/>
    <property type="evidence" value="ECO:0000318"/>
    <property type="project" value="GO_Central"/>
</dbReference>
<dbReference type="GO" id="GO:0000425">
    <property type="term" value="P:pexophagy"/>
    <property type="evidence" value="ECO:0000318"/>
    <property type="project" value="GO_Central"/>
</dbReference>
<dbReference type="GO" id="GO:0034727">
    <property type="term" value="P:piecemeal microautophagy of the nucleus"/>
    <property type="evidence" value="ECO:0007669"/>
    <property type="project" value="EnsemblFungi"/>
</dbReference>
<dbReference type="GO" id="GO:0034497">
    <property type="term" value="P:protein localization to phagophore assembly site"/>
    <property type="evidence" value="ECO:0000318"/>
    <property type="project" value="GO_Central"/>
</dbReference>
<dbReference type="GO" id="GO:0015031">
    <property type="term" value="P:protein transport"/>
    <property type="evidence" value="ECO:0007669"/>
    <property type="project" value="UniProtKB-KW"/>
</dbReference>
<dbReference type="Gene3D" id="2.130.10.10">
    <property type="entry name" value="YVTN repeat-like/Quinoprotein amine dehydrogenase"/>
    <property type="match status" value="1"/>
</dbReference>
<dbReference type="InterPro" id="IPR048720">
    <property type="entry name" value="PROPPIN"/>
</dbReference>
<dbReference type="InterPro" id="IPR015943">
    <property type="entry name" value="WD40/YVTN_repeat-like_dom_sf"/>
</dbReference>
<dbReference type="InterPro" id="IPR036322">
    <property type="entry name" value="WD40_repeat_dom_sf"/>
</dbReference>
<dbReference type="InterPro" id="IPR001680">
    <property type="entry name" value="WD40_rpt"/>
</dbReference>
<dbReference type="PANTHER" id="PTHR11227">
    <property type="entry name" value="WD-REPEAT PROTEIN INTERACTING WITH PHOSPHOINOSIDES WIPI -RELATED"/>
    <property type="match status" value="1"/>
</dbReference>
<dbReference type="Pfam" id="PF21032">
    <property type="entry name" value="PROPPIN"/>
    <property type="match status" value="1"/>
</dbReference>
<dbReference type="SMART" id="SM00320">
    <property type="entry name" value="WD40"/>
    <property type="match status" value="2"/>
</dbReference>
<dbReference type="SUPFAM" id="SSF50978">
    <property type="entry name" value="WD40 repeat-like"/>
    <property type="match status" value="1"/>
</dbReference>